<proteinExistence type="evidence at protein level"/>
<dbReference type="EC" id="2.7.11.1"/>
<dbReference type="EMBL" id="AF465412">
    <property type="protein sequence ID" value="AAL69981.1"/>
    <property type="molecule type" value="mRNA"/>
</dbReference>
<dbReference type="RefSeq" id="NP_570105.1">
    <property type="nucleotide sequence ID" value="NM_130749.1"/>
</dbReference>
<dbReference type="SMR" id="Q8VHF0"/>
<dbReference type="BioGRID" id="250933">
    <property type="interactions" value="1"/>
</dbReference>
<dbReference type="FunCoup" id="Q8VHF0">
    <property type="interactions" value="3886"/>
</dbReference>
<dbReference type="IntAct" id="Q8VHF0">
    <property type="interactions" value="2"/>
</dbReference>
<dbReference type="STRING" id="10116.ENSRNOP00000073297"/>
<dbReference type="iPTMnet" id="Q8VHF0"/>
<dbReference type="PhosphoSitePlus" id="Q8VHF0"/>
<dbReference type="PaxDb" id="10116-ENSRNOP00000014395"/>
<dbReference type="GeneID" id="170577"/>
<dbReference type="KEGG" id="rno:170577"/>
<dbReference type="UCSC" id="RGD:619883">
    <property type="organism name" value="rat"/>
</dbReference>
<dbReference type="AGR" id="RGD:619883"/>
<dbReference type="CTD" id="4140"/>
<dbReference type="RGD" id="619883">
    <property type="gene designation" value="Mark3"/>
</dbReference>
<dbReference type="eggNOG" id="KOG0586">
    <property type="taxonomic scope" value="Eukaryota"/>
</dbReference>
<dbReference type="InParanoid" id="Q8VHF0"/>
<dbReference type="OrthoDB" id="504170at2759"/>
<dbReference type="PhylomeDB" id="Q8VHF0"/>
<dbReference type="Reactome" id="R-RNO-5673000">
    <property type="pathway name" value="RAF activation"/>
</dbReference>
<dbReference type="Reactome" id="R-RNO-5674135">
    <property type="pathway name" value="MAP2K and MAPK activation"/>
</dbReference>
<dbReference type="Reactome" id="R-RNO-5675221">
    <property type="pathway name" value="Negative regulation of MAPK pathway"/>
</dbReference>
<dbReference type="Reactome" id="R-RNO-9856649">
    <property type="pathway name" value="Transcriptional and post-translational regulation of MITF-M expression and activity"/>
</dbReference>
<dbReference type="PRO" id="PR:Q8VHF0"/>
<dbReference type="Proteomes" id="UP000002494">
    <property type="component" value="Unplaced"/>
</dbReference>
<dbReference type="GO" id="GO:0005737">
    <property type="term" value="C:cytoplasm"/>
    <property type="evidence" value="ECO:0000250"/>
    <property type="project" value="UniProtKB"/>
</dbReference>
<dbReference type="GO" id="GO:0030425">
    <property type="term" value="C:dendrite"/>
    <property type="evidence" value="ECO:0000250"/>
    <property type="project" value="UniProtKB"/>
</dbReference>
<dbReference type="GO" id="GO:0005886">
    <property type="term" value="C:plasma membrane"/>
    <property type="evidence" value="ECO:0000250"/>
    <property type="project" value="UniProtKB"/>
</dbReference>
<dbReference type="GO" id="GO:0005524">
    <property type="term" value="F:ATP binding"/>
    <property type="evidence" value="ECO:0007669"/>
    <property type="project" value="UniProtKB-KW"/>
</dbReference>
<dbReference type="GO" id="GO:0106310">
    <property type="term" value="F:protein serine kinase activity"/>
    <property type="evidence" value="ECO:0007669"/>
    <property type="project" value="RHEA"/>
</dbReference>
<dbReference type="GO" id="GO:0004674">
    <property type="term" value="F:protein serine/threonine kinase activity"/>
    <property type="evidence" value="ECO:0000250"/>
    <property type="project" value="UniProtKB"/>
</dbReference>
<dbReference type="GO" id="GO:0050321">
    <property type="term" value="F:tau-protein kinase activity"/>
    <property type="evidence" value="ECO:0000250"/>
    <property type="project" value="UniProtKB"/>
</dbReference>
<dbReference type="GO" id="GO:0035556">
    <property type="term" value="P:intracellular signal transduction"/>
    <property type="evidence" value="ECO:0000318"/>
    <property type="project" value="GO_Central"/>
</dbReference>
<dbReference type="GO" id="GO:0000226">
    <property type="term" value="P:microtubule cytoskeleton organization"/>
    <property type="evidence" value="ECO:0000318"/>
    <property type="project" value="GO_Central"/>
</dbReference>
<dbReference type="GO" id="GO:0035331">
    <property type="term" value="P:negative regulation of hippo signaling"/>
    <property type="evidence" value="ECO:0000250"/>
    <property type="project" value="UniProtKB"/>
</dbReference>
<dbReference type="GO" id="GO:1900181">
    <property type="term" value="P:negative regulation of protein localization to nucleus"/>
    <property type="evidence" value="ECO:0000250"/>
    <property type="project" value="UniProtKB"/>
</dbReference>
<dbReference type="GO" id="GO:0006468">
    <property type="term" value="P:protein phosphorylation"/>
    <property type="evidence" value="ECO:0000250"/>
    <property type="project" value="UniProtKB"/>
</dbReference>
<dbReference type="GO" id="GO:0010389">
    <property type="term" value="P:regulation of G2/M transition of mitotic cell cycle"/>
    <property type="evidence" value="ECO:0000250"/>
    <property type="project" value="ARUK-UCL"/>
</dbReference>
<dbReference type="CDD" id="cd12196">
    <property type="entry name" value="MARK1-3_C"/>
    <property type="match status" value="1"/>
</dbReference>
<dbReference type="CDD" id="cd14072">
    <property type="entry name" value="STKc_MARK"/>
    <property type="match status" value="1"/>
</dbReference>
<dbReference type="CDD" id="cd14407">
    <property type="entry name" value="UBA_MARK3_4"/>
    <property type="match status" value="1"/>
</dbReference>
<dbReference type="FunFam" id="1.10.510.10:FF:001032">
    <property type="entry name" value="KP78b, isoform A"/>
    <property type="match status" value="1"/>
</dbReference>
<dbReference type="FunFam" id="1.10.8.10:FF:000005">
    <property type="entry name" value="Non-specific serine/threonine protein kinase"/>
    <property type="match status" value="1"/>
</dbReference>
<dbReference type="FunFam" id="3.30.200.20:FF:000003">
    <property type="entry name" value="Non-specific serine/threonine protein kinase"/>
    <property type="match status" value="1"/>
</dbReference>
<dbReference type="FunFam" id="3.30.310.80:FF:000001">
    <property type="entry name" value="Non-specific serine/threonine protein kinase"/>
    <property type="match status" value="1"/>
</dbReference>
<dbReference type="Gene3D" id="1.10.8.10">
    <property type="entry name" value="DNA helicase RuvA subunit, C-terminal domain"/>
    <property type="match status" value="1"/>
</dbReference>
<dbReference type="Gene3D" id="3.30.310.80">
    <property type="entry name" value="Kinase associated domain 1, KA1"/>
    <property type="match status" value="1"/>
</dbReference>
<dbReference type="Gene3D" id="3.30.200.20">
    <property type="entry name" value="Phosphorylase Kinase, domain 1"/>
    <property type="match status" value="1"/>
</dbReference>
<dbReference type="Gene3D" id="1.10.510.10">
    <property type="entry name" value="Transferase(Phosphotransferase) domain 1"/>
    <property type="match status" value="1"/>
</dbReference>
<dbReference type="InterPro" id="IPR028375">
    <property type="entry name" value="KA1/Ssp2_C"/>
</dbReference>
<dbReference type="InterPro" id="IPR001772">
    <property type="entry name" value="KA1_dom"/>
</dbReference>
<dbReference type="InterPro" id="IPR011009">
    <property type="entry name" value="Kinase-like_dom_sf"/>
</dbReference>
<dbReference type="InterPro" id="IPR049508">
    <property type="entry name" value="MARK1-4_cat"/>
</dbReference>
<dbReference type="InterPro" id="IPR000719">
    <property type="entry name" value="Prot_kinase_dom"/>
</dbReference>
<dbReference type="InterPro" id="IPR017441">
    <property type="entry name" value="Protein_kinase_ATP_BS"/>
</dbReference>
<dbReference type="InterPro" id="IPR008271">
    <property type="entry name" value="Ser/Thr_kinase_AS"/>
</dbReference>
<dbReference type="InterPro" id="IPR015940">
    <property type="entry name" value="UBA"/>
</dbReference>
<dbReference type="PANTHER" id="PTHR24346">
    <property type="entry name" value="MAP/MICROTUBULE AFFINITY-REGULATING KINASE"/>
    <property type="match status" value="1"/>
</dbReference>
<dbReference type="PANTHER" id="PTHR24346:SF1">
    <property type="entry name" value="MAP_MICROTUBULE AFFINITY-REGULATING KINASE 3"/>
    <property type="match status" value="1"/>
</dbReference>
<dbReference type="Pfam" id="PF02149">
    <property type="entry name" value="KA1"/>
    <property type="match status" value="1"/>
</dbReference>
<dbReference type="Pfam" id="PF00069">
    <property type="entry name" value="Pkinase"/>
    <property type="match status" value="1"/>
</dbReference>
<dbReference type="Pfam" id="PF00627">
    <property type="entry name" value="UBA"/>
    <property type="match status" value="1"/>
</dbReference>
<dbReference type="SMART" id="SM00220">
    <property type="entry name" value="S_TKc"/>
    <property type="match status" value="1"/>
</dbReference>
<dbReference type="SMART" id="SM00165">
    <property type="entry name" value="UBA"/>
    <property type="match status" value="1"/>
</dbReference>
<dbReference type="SUPFAM" id="SSF103243">
    <property type="entry name" value="KA1-like"/>
    <property type="match status" value="1"/>
</dbReference>
<dbReference type="SUPFAM" id="SSF56112">
    <property type="entry name" value="Protein kinase-like (PK-like)"/>
    <property type="match status" value="1"/>
</dbReference>
<dbReference type="PROSITE" id="PS50032">
    <property type="entry name" value="KA1"/>
    <property type="match status" value="1"/>
</dbReference>
<dbReference type="PROSITE" id="PS00107">
    <property type="entry name" value="PROTEIN_KINASE_ATP"/>
    <property type="match status" value="1"/>
</dbReference>
<dbReference type="PROSITE" id="PS50011">
    <property type="entry name" value="PROTEIN_KINASE_DOM"/>
    <property type="match status" value="1"/>
</dbReference>
<dbReference type="PROSITE" id="PS00108">
    <property type="entry name" value="PROTEIN_KINASE_ST"/>
    <property type="match status" value="1"/>
</dbReference>
<dbReference type="PROSITE" id="PS50030">
    <property type="entry name" value="UBA"/>
    <property type="match status" value="1"/>
</dbReference>
<gene>
    <name type="primary">Mark3</name>
</gene>
<keyword id="KW-0067">ATP-binding</keyword>
<keyword id="KW-1003">Cell membrane</keyword>
<keyword id="KW-0966">Cell projection</keyword>
<keyword id="KW-0963">Cytoplasm</keyword>
<keyword id="KW-0418">Kinase</keyword>
<keyword id="KW-0472">Membrane</keyword>
<keyword id="KW-0547">Nucleotide-binding</keyword>
<keyword id="KW-0597">Phosphoprotein</keyword>
<keyword id="KW-1185">Reference proteome</keyword>
<keyword id="KW-0723">Serine/threonine-protein kinase</keyword>
<keyword id="KW-0808">Transferase</keyword>
<organism>
    <name type="scientific">Rattus norvegicus</name>
    <name type="common">Rat</name>
    <dbReference type="NCBI Taxonomy" id="10116"/>
    <lineage>
        <taxon>Eukaryota</taxon>
        <taxon>Metazoa</taxon>
        <taxon>Chordata</taxon>
        <taxon>Craniata</taxon>
        <taxon>Vertebrata</taxon>
        <taxon>Euteleostomi</taxon>
        <taxon>Mammalia</taxon>
        <taxon>Eutheria</taxon>
        <taxon>Euarchontoglires</taxon>
        <taxon>Glires</taxon>
        <taxon>Rodentia</taxon>
        <taxon>Myomorpha</taxon>
        <taxon>Muroidea</taxon>
        <taxon>Muridae</taxon>
        <taxon>Murinae</taxon>
        <taxon>Rattus</taxon>
    </lineage>
</organism>
<evidence type="ECO:0000250" key="1">
    <source>
        <dbReference type="UniProtKB" id="P27448"/>
    </source>
</evidence>
<evidence type="ECO:0000250" key="2">
    <source>
        <dbReference type="UniProtKB" id="Q03141"/>
    </source>
</evidence>
<evidence type="ECO:0000255" key="3">
    <source>
        <dbReference type="PROSITE-ProRule" id="PRU00159"/>
    </source>
</evidence>
<evidence type="ECO:0000255" key="4">
    <source>
        <dbReference type="PROSITE-ProRule" id="PRU00212"/>
    </source>
</evidence>
<evidence type="ECO:0000255" key="5">
    <source>
        <dbReference type="PROSITE-ProRule" id="PRU00565"/>
    </source>
</evidence>
<evidence type="ECO:0000255" key="6">
    <source>
        <dbReference type="PROSITE-ProRule" id="PRU10027"/>
    </source>
</evidence>
<evidence type="ECO:0000256" key="7">
    <source>
        <dbReference type="SAM" id="MobiDB-lite"/>
    </source>
</evidence>
<evidence type="ECO:0000305" key="8"/>
<evidence type="ECO:0007744" key="9">
    <source>
    </source>
</evidence>
<protein>
    <recommendedName>
        <fullName>MAP/microtubule affinity-regulating kinase 3</fullName>
        <ecNumber>2.7.11.1</ecNumber>
    </recommendedName>
</protein>
<accession>Q8VHF0</accession>
<sequence length="797" mass="88751">MSTRTPLPTVNERDTENHISHGDGRQEVTSRTGRSGARCRNSIASCADEQPHIGNYRLLKTIGKGNFAKVKLARHILTGREVAIKIIDKTQLNPTSLQKLFREVRIMKILNHPNIVKLFEVIETEKTLYLIMEYASGGEVFDYLVAHGRMKEKEARAKFRQIVSAVQYCHQKRIVHRDLKAENLLLDADMNIKITDFGFSNEFTVGSKLDTFCGSPPYAAPELFQGKKYDGPEVDVWSLGVILYTLVSGSLPFDGQNLKELRERVLRGKYRIPFYMSTDCENLLKRFLVLNPVKRGTLEQIMKDRWINAGHEEEELKPFVEPELDISDQKRIDIMVGMGYSQEEIQESLSKMKYDEITATYLLLGRKSAELDASDSSSSSNLSLAKVRPSSDLSNSTGQSPHHKGQRSVSSSQKQRRYSDHAGPAIPSVVAYPKRSQTSTADSDLKEDGVPSRKSGSSAVGGKGIAPASPMLGNASNPNKADIPERKKSPAVPSSNAASGGMTRRNTYVCSERCAADRHSVIQNGKESSLTEVFAYAASPASLCATSTCRLRHQRSMSVSASGHPKMVLPPIDSEGDTFKAITTPDQRTPVASTHSISSATTPDRIRFPRGTASRSTFHGQPRERRTATYNGPPASPSLSHEATPLSQTRSRGSTNLFSKLTSKLTRRLPTEYERNGRYEGSSRNVSSEQKDENREAKPRSLRFTWSMKTTSSMDPSDMMREIRKVLDANTCDYEQRERFLLFCVHGDGHAESLVQWEMEVCKLPRLSLNGVRFKRISGTSIAFKNIASKIANELKL</sequence>
<feature type="chain" id="PRO_0000086306" description="MAP/microtubule affinity-regulating kinase 3">
    <location>
        <begin position="1"/>
        <end position="797"/>
    </location>
</feature>
<feature type="domain" description="Protein kinase" evidence="3">
    <location>
        <begin position="56"/>
        <end position="307"/>
    </location>
</feature>
<feature type="domain" description="UBA" evidence="4">
    <location>
        <begin position="326"/>
        <end position="365"/>
    </location>
</feature>
<feature type="domain" description="KA1" evidence="5">
    <location>
        <begin position="748"/>
        <end position="797"/>
    </location>
</feature>
<feature type="region of interest" description="Disordered" evidence="7">
    <location>
        <begin position="1"/>
        <end position="35"/>
    </location>
</feature>
<feature type="region of interest" description="Disordered" evidence="7">
    <location>
        <begin position="372"/>
        <end position="504"/>
    </location>
</feature>
<feature type="region of interest" description="Disordered" evidence="7">
    <location>
        <begin position="585"/>
        <end position="701"/>
    </location>
</feature>
<feature type="compositionally biased region" description="Basic and acidic residues" evidence="7">
    <location>
        <begin position="11"/>
        <end position="28"/>
    </location>
</feature>
<feature type="compositionally biased region" description="Low complexity" evidence="7">
    <location>
        <begin position="374"/>
        <end position="385"/>
    </location>
</feature>
<feature type="compositionally biased region" description="Polar residues" evidence="7">
    <location>
        <begin position="391"/>
        <end position="400"/>
    </location>
</feature>
<feature type="compositionally biased region" description="Polar residues" evidence="7">
    <location>
        <begin position="492"/>
        <end position="504"/>
    </location>
</feature>
<feature type="compositionally biased region" description="Polar residues" evidence="7">
    <location>
        <begin position="585"/>
        <end position="602"/>
    </location>
</feature>
<feature type="compositionally biased region" description="Polar residues" evidence="7">
    <location>
        <begin position="637"/>
        <end position="664"/>
    </location>
</feature>
<feature type="compositionally biased region" description="Basic and acidic residues" evidence="7">
    <location>
        <begin position="669"/>
        <end position="678"/>
    </location>
</feature>
<feature type="compositionally biased region" description="Basic and acidic residues" evidence="7">
    <location>
        <begin position="689"/>
        <end position="699"/>
    </location>
</feature>
<feature type="active site" description="Proton acceptor" evidence="3 6">
    <location>
        <position position="178"/>
    </location>
</feature>
<feature type="binding site" evidence="3">
    <location>
        <begin position="62"/>
        <end position="70"/>
    </location>
    <ligand>
        <name>ATP</name>
        <dbReference type="ChEBI" id="CHEBI:30616"/>
    </ligand>
</feature>
<feature type="binding site" evidence="3">
    <location>
        <position position="85"/>
    </location>
    <ligand>
        <name>ATP</name>
        <dbReference type="ChEBI" id="CHEBI:30616"/>
    </ligand>
</feature>
<feature type="modified residue" description="Phosphoserine" evidence="1">
    <location>
        <position position="42"/>
    </location>
</feature>
<feature type="modified residue" description="Phosphothreonine; by LKB1" evidence="1">
    <location>
        <position position="211"/>
    </location>
</feature>
<feature type="modified residue" description="Phosphoserine" evidence="2">
    <location>
        <position position="368"/>
    </location>
</feature>
<feature type="modified residue" description="Phosphoserine" evidence="9">
    <location>
        <position position="374"/>
    </location>
</feature>
<feature type="modified residue" description="Phosphoserine" evidence="1">
    <location>
        <position position="376"/>
    </location>
</feature>
<feature type="modified residue" description="Phosphoserine" evidence="1">
    <location>
        <position position="380"/>
    </location>
</feature>
<feature type="modified residue" description="Phosphoserine" evidence="1">
    <location>
        <position position="383"/>
    </location>
</feature>
<feature type="modified residue" description="Phosphoserine" evidence="1">
    <location>
        <position position="400"/>
    </location>
</feature>
<feature type="modified residue" description="Phosphoserine" evidence="1">
    <location>
        <position position="419"/>
    </location>
</feature>
<feature type="modified residue" description="Phosphoserine" evidence="9">
    <location>
        <position position="469"/>
    </location>
</feature>
<feature type="modified residue" description="Phosphoserine" evidence="1">
    <location>
        <position position="593"/>
    </location>
</feature>
<feature type="modified residue" description="Phosphoserine" evidence="2">
    <location>
        <position position="596"/>
    </location>
</feature>
<feature type="modified residue" description="Phosphothreonine" evidence="1">
    <location>
        <position position="602"/>
    </location>
</feature>
<feature type="modified residue" description="Phosphothreonine; by PKC/PRKCZ" evidence="1">
    <location>
        <position position="617"/>
    </location>
</feature>
<feature type="modified residue" description="Phosphoserine" evidence="1">
    <location>
        <position position="636"/>
    </location>
</feature>
<feature type="modified residue" description="Phosphoserine" evidence="1">
    <location>
        <position position="651"/>
    </location>
</feature>
<feature type="modified residue" description="Phosphoserine" evidence="1">
    <location>
        <position position="654"/>
    </location>
</feature>
<feature type="modified residue" description="Phosphoserine" evidence="1">
    <location>
        <position position="687"/>
    </location>
</feature>
<reference key="1">
    <citation type="submission" date="2002-01" db="EMBL/GenBank/DDBJ databases">
        <title>Characterization of a third microtubule affinity-regulating kinase from rat brain.</title>
        <authorList>
            <person name="Drewes G."/>
        </authorList>
    </citation>
    <scope>NUCLEOTIDE SEQUENCE [MRNA]</scope>
    <source>
        <strain>Sprague-Dawley</strain>
    </source>
</reference>
<reference key="2">
    <citation type="journal article" date="2012" name="Nat. Commun.">
        <title>Quantitative maps of protein phosphorylation sites across 14 different rat organs and tissues.</title>
        <authorList>
            <person name="Lundby A."/>
            <person name="Secher A."/>
            <person name="Lage K."/>
            <person name="Nordsborg N.B."/>
            <person name="Dmytriyev A."/>
            <person name="Lundby C."/>
            <person name="Olsen J.V."/>
        </authorList>
    </citation>
    <scope>PHOSPHORYLATION [LARGE SCALE ANALYSIS] AT SER-374 AND SER-469</scope>
    <scope>IDENTIFICATION BY MASS SPECTROMETRY [LARGE SCALE ANALYSIS]</scope>
</reference>
<comment type="function">
    <text evidence="1">Serine/threonine-protein kinase. Involved in the specific phosphorylation of microtubule-associated proteins for MAP2 and MAP4. Phosphorylates the microtubule-associated protein MAPT/TAU. Phosphorylates CDC25C on 'Ser-216'. Regulates localization and activity of some histone deacetylases by mediating phosphorylation of HDAC7, promoting subsequent interaction between HDAC7 and 14-3-3 and export from the nucleus. Regulates localization and activity of MITF by mediating its phosphorylation, promoting subsequent interaction between MITF and 14-3-3 and retention in the cytosol. Negatively regulates the Hippo signaling pathway and antagonizes the phosphorylation of LATS1. Cooperates with DLG5 to inhibit the kinase activity of STK3/MST2 toward LATS1. Phosphorylates PKP2 and KSR1.</text>
</comment>
<comment type="catalytic activity">
    <reaction evidence="1">
        <text>L-seryl-[protein] + ATP = O-phospho-L-seryl-[protein] + ADP + H(+)</text>
        <dbReference type="Rhea" id="RHEA:17989"/>
        <dbReference type="Rhea" id="RHEA-COMP:9863"/>
        <dbReference type="Rhea" id="RHEA-COMP:11604"/>
        <dbReference type="ChEBI" id="CHEBI:15378"/>
        <dbReference type="ChEBI" id="CHEBI:29999"/>
        <dbReference type="ChEBI" id="CHEBI:30616"/>
        <dbReference type="ChEBI" id="CHEBI:83421"/>
        <dbReference type="ChEBI" id="CHEBI:456216"/>
        <dbReference type="EC" id="2.7.11.1"/>
    </reaction>
</comment>
<comment type="catalytic activity">
    <reaction evidence="1">
        <text>L-threonyl-[protein] + ATP = O-phospho-L-threonyl-[protein] + ADP + H(+)</text>
        <dbReference type="Rhea" id="RHEA:46608"/>
        <dbReference type="Rhea" id="RHEA-COMP:11060"/>
        <dbReference type="Rhea" id="RHEA-COMP:11605"/>
        <dbReference type="ChEBI" id="CHEBI:15378"/>
        <dbReference type="ChEBI" id="CHEBI:30013"/>
        <dbReference type="ChEBI" id="CHEBI:30616"/>
        <dbReference type="ChEBI" id="CHEBI:61977"/>
        <dbReference type="ChEBI" id="CHEBI:456216"/>
        <dbReference type="EC" id="2.7.11.1"/>
    </reaction>
</comment>
<comment type="activity regulation">
    <text evidence="1">Activated by phosphorylation on Thr-211. Inhibited by phosphorylation on Thr-617 (By similarity).</text>
</comment>
<comment type="subunit">
    <text evidence="1">Interacts with MAPT/TAU. Interacts with DLG5 (via coiled-coil domain) (By similarity). Interacts with STK3/MST2 and STK4/MST1 in the presence of DLG5 (By similarity). Interacts with YWHAB, YWHAG, YWHAQ and YWHAZ (By similarity). Interacts with PKP2 (via N-terminus) (By similarity). Interacts with CDC25C (By similarity). Interacts with KSR1 (By similarity).</text>
</comment>
<comment type="subcellular location">
    <subcellularLocation>
        <location evidence="1">Cell membrane</location>
        <topology evidence="1">Peripheral membrane protein</topology>
    </subcellularLocation>
    <subcellularLocation>
        <location evidence="1">Cell projection</location>
        <location evidence="1">Dendrite</location>
    </subcellularLocation>
    <subcellularLocation>
        <location evidence="1">Cytoplasm</location>
    </subcellularLocation>
</comment>
<comment type="PTM">
    <text evidence="1">Phosphorylated at Thr-211 by STK11/LKB1 in complex with STE20-related adapter-alpha (STRADA) pseudo kinase and CAB39. Phosphorylation at Thr-617 by PRKCZ/aPKC inhibits the kinase activity (By similarity).</text>
</comment>
<comment type="similarity">
    <text evidence="8">Belongs to the protein kinase superfamily. CAMK Ser/Thr protein kinase family. SNF1 subfamily.</text>
</comment>
<name>MARK3_RAT</name>